<keyword id="KW-0227">DNA damage</keyword>
<keyword id="KW-0234">DNA repair</keyword>
<organism>
    <name type="scientific">Haemophilus influenzae (strain 86-028NP)</name>
    <dbReference type="NCBI Taxonomy" id="281310"/>
    <lineage>
        <taxon>Bacteria</taxon>
        <taxon>Pseudomonadati</taxon>
        <taxon>Pseudomonadota</taxon>
        <taxon>Gammaproteobacteria</taxon>
        <taxon>Pasteurellales</taxon>
        <taxon>Pasteurellaceae</taxon>
        <taxon>Haemophilus</taxon>
    </lineage>
</organism>
<dbReference type="EMBL" id="CP000057">
    <property type="protein sequence ID" value="AAX87070.1"/>
    <property type="molecule type" value="Genomic_DNA"/>
</dbReference>
<dbReference type="RefSeq" id="WP_011271809.1">
    <property type="nucleotide sequence ID" value="NC_007146.2"/>
</dbReference>
<dbReference type="SMR" id="Q4QPH7"/>
<dbReference type="KEGG" id="hit:NTHI0080"/>
<dbReference type="HOGENOM" id="CLU_004131_5_1_6"/>
<dbReference type="Proteomes" id="UP000002525">
    <property type="component" value="Chromosome"/>
</dbReference>
<dbReference type="GO" id="GO:0032300">
    <property type="term" value="C:mismatch repair complex"/>
    <property type="evidence" value="ECO:0007669"/>
    <property type="project" value="InterPro"/>
</dbReference>
<dbReference type="GO" id="GO:0005524">
    <property type="term" value="F:ATP binding"/>
    <property type="evidence" value="ECO:0007669"/>
    <property type="project" value="InterPro"/>
</dbReference>
<dbReference type="GO" id="GO:0016887">
    <property type="term" value="F:ATP hydrolysis activity"/>
    <property type="evidence" value="ECO:0007669"/>
    <property type="project" value="InterPro"/>
</dbReference>
<dbReference type="GO" id="GO:0140664">
    <property type="term" value="F:ATP-dependent DNA damage sensor activity"/>
    <property type="evidence" value="ECO:0007669"/>
    <property type="project" value="InterPro"/>
</dbReference>
<dbReference type="GO" id="GO:0030983">
    <property type="term" value="F:mismatched DNA binding"/>
    <property type="evidence" value="ECO:0007669"/>
    <property type="project" value="InterPro"/>
</dbReference>
<dbReference type="GO" id="GO:0006298">
    <property type="term" value="P:mismatch repair"/>
    <property type="evidence" value="ECO:0007669"/>
    <property type="project" value="UniProtKB-UniRule"/>
</dbReference>
<dbReference type="CDD" id="cd16926">
    <property type="entry name" value="HATPase_MutL-MLH-PMS-like"/>
    <property type="match status" value="1"/>
</dbReference>
<dbReference type="CDD" id="cd03482">
    <property type="entry name" value="MutL_Trans_MutL"/>
    <property type="match status" value="1"/>
</dbReference>
<dbReference type="FunFam" id="3.30.230.10:FF:000013">
    <property type="entry name" value="DNA mismatch repair endonuclease MutL"/>
    <property type="match status" value="1"/>
</dbReference>
<dbReference type="FunFam" id="3.30.565.10:FF:000003">
    <property type="entry name" value="DNA mismatch repair endonuclease MutL"/>
    <property type="match status" value="1"/>
</dbReference>
<dbReference type="Gene3D" id="3.30.230.10">
    <property type="match status" value="1"/>
</dbReference>
<dbReference type="Gene3D" id="3.30.565.10">
    <property type="entry name" value="Histidine kinase-like ATPase, C-terminal domain"/>
    <property type="match status" value="1"/>
</dbReference>
<dbReference type="Gene3D" id="3.30.1540.20">
    <property type="entry name" value="MutL, C-terminal domain, dimerisation subdomain"/>
    <property type="match status" value="1"/>
</dbReference>
<dbReference type="Gene3D" id="3.30.1370.100">
    <property type="entry name" value="MutL, C-terminal domain, regulatory subdomain"/>
    <property type="match status" value="1"/>
</dbReference>
<dbReference type="HAMAP" id="MF_00149">
    <property type="entry name" value="DNA_mis_repair"/>
    <property type="match status" value="1"/>
</dbReference>
<dbReference type="InterPro" id="IPR014762">
    <property type="entry name" value="DNA_mismatch_repair_CS"/>
</dbReference>
<dbReference type="InterPro" id="IPR020667">
    <property type="entry name" value="DNA_mismatch_repair_MutL"/>
</dbReference>
<dbReference type="InterPro" id="IPR013507">
    <property type="entry name" value="DNA_mismatch_S5_2-like"/>
</dbReference>
<dbReference type="InterPro" id="IPR036890">
    <property type="entry name" value="HATPase_C_sf"/>
</dbReference>
<dbReference type="InterPro" id="IPR002099">
    <property type="entry name" value="MutL/Mlh/PMS"/>
</dbReference>
<dbReference type="InterPro" id="IPR038973">
    <property type="entry name" value="MutL/Mlh/Pms-like"/>
</dbReference>
<dbReference type="InterPro" id="IPR014790">
    <property type="entry name" value="MutL_C"/>
</dbReference>
<dbReference type="InterPro" id="IPR042120">
    <property type="entry name" value="MutL_C_dimsub"/>
</dbReference>
<dbReference type="InterPro" id="IPR042121">
    <property type="entry name" value="MutL_C_regsub"/>
</dbReference>
<dbReference type="InterPro" id="IPR037198">
    <property type="entry name" value="MutL_C_sf"/>
</dbReference>
<dbReference type="InterPro" id="IPR020568">
    <property type="entry name" value="Ribosomal_Su5_D2-typ_SF"/>
</dbReference>
<dbReference type="InterPro" id="IPR014721">
    <property type="entry name" value="Ribsml_uS5_D2-typ_fold_subgr"/>
</dbReference>
<dbReference type="NCBIfam" id="TIGR00585">
    <property type="entry name" value="mutl"/>
    <property type="match status" value="1"/>
</dbReference>
<dbReference type="NCBIfam" id="NF000948">
    <property type="entry name" value="PRK00095.1-1"/>
    <property type="match status" value="1"/>
</dbReference>
<dbReference type="PANTHER" id="PTHR10073">
    <property type="entry name" value="DNA MISMATCH REPAIR PROTEIN MLH, PMS, MUTL"/>
    <property type="match status" value="1"/>
</dbReference>
<dbReference type="PANTHER" id="PTHR10073:SF12">
    <property type="entry name" value="DNA MISMATCH REPAIR PROTEIN MLH1"/>
    <property type="match status" value="1"/>
</dbReference>
<dbReference type="Pfam" id="PF01119">
    <property type="entry name" value="DNA_mis_repair"/>
    <property type="match status" value="1"/>
</dbReference>
<dbReference type="Pfam" id="PF13589">
    <property type="entry name" value="HATPase_c_3"/>
    <property type="match status" value="1"/>
</dbReference>
<dbReference type="Pfam" id="PF08676">
    <property type="entry name" value="MutL_C"/>
    <property type="match status" value="1"/>
</dbReference>
<dbReference type="SMART" id="SM01340">
    <property type="entry name" value="DNA_mis_repair"/>
    <property type="match status" value="1"/>
</dbReference>
<dbReference type="SMART" id="SM00853">
    <property type="entry name" value="MutL_C"/>
    <property type="match status" value="1"/>
</dbReference>
<dbReference type="SUPFAM" id="SSF55874">
    <property type="entry name" value="ATPase domain of HSP90 chaperone/DNA topoisomerase II/histidine kinase"/>
    <property type="match status" value="1"/>
</dbReference>
<dbReference type="SUPFAM" id="SSF118116">
    <property type="entry name" value="DNA mismatch repair protein MutL"/>
    <property type="match status" value="1"/>
</dbReference>
<dbReference type="SUPFAM" id="SSF54211">
    <property type="entry name" value="Ribosomal protein S5 domain 2-like"/>
    <property type="match status" value="1"/>
</dbReference>
<dbReference type="PROSITE" id="PS00058">
    <property type="entry name" value="DNA_MISMATCH_REPAIR_1"/>
    <property type="match status" value="1"/>
</dbReference>
<protein>
    <recommendedName>
        <fullName evidence="1">DNA mismatch repair protein MutL</fullName>
    </recommendedName>
</protein>
<reference key="1">
    <citation type="journal article" date="2005" name="J. Bacteriol.">
        <title>Genomic sequence of an otitis media isolate of nontypeable Haemophilus influenzae: comparative study with H. influenzae serotype d, strain KW20.</title>
        <authorList>
            <person name="Harrison A."/>
            <person name="Dyer D.W."/>
            <person name="Gillaspy A."/>
            <person name="Ray W.C."/>
            <person name="Mungur R."/>
            <person name="Carson M.B."/>
            <person name="Zhong H."/>
            <person name="Gipson J."/>
            <person name="Gipson M."/>
            <person name="Johnson L.S."/>
            <person name="Lewis L."/>
            <person name="Bakaletz L.O."/>
            <person name="Munson R.S. Jr."/>
        </authorList>
    </citation>
    <scope>NUCLEOTIDE SEQUENCE [LARGE SCALE GENOMIC DNA]</scope>
    <source>
        <strain>86-028NP</strain>
    </source>
</reference>
<gene>
    <name evidence="1" type="primary">mutL</name>
    <name type="ordered locus">NTHI0080</name>
</gene>
<evidence type="ECO:0000255" key="1">
    <source>
        <dbReference type="HAMAP-Rule" id="MF_00149"/>
    </source>
</evidence>
<proteinExistence type="inferred from homology"/>
<name>MUTL_HAEI8</name>
<accession>Q4QPH7</accession>
<sequence>MPIKILSPQLANQIAAGEVVERPASVVKELVENSLDAGANKIQIDIENGGANLIRIRDNGCGIPKEELSLALARHATSKIADLDDLEAILSLGFRGEALASISSVSRLTLTSRTEEQTEAWQVYAQGRDMETTIKPASHPVGTTVEVANLFFNTPARRKFLRTDKTEFAHIDEVIRRIALTKFNTAFTLTHNGKIIRQYRPAEAINQQLKRVAAICGDDFVKNALRIDWKHDDLHLSGWVATPNFSRTQNDLSYCYINGRMVRDKVISHAIRQAYAQYLPTDAYPAFVLFIDLNPHDVDVNVHPTKHEVRFHQQRLIHDFIYEGISYALNNQEQLNWHTDQSAVENHEENTVREPQPNYSIRPNRAAAGQNSFAPKYYEKPQQNQPHFSNTPVLPNHVSTGYRDYRSDAPSKTEQRLYAELLRTLPPTAQKDISDTAQQNISDTAKIISTEIIECSSHLRTLSLIENRALLLQQNQDFFLLSLEKLQRLQWQLALQQIQIEQQPLLIPIVFRLTEAQFQAWQQYSDNFKKIGFEFIENQAQLRLTLNKVPNVLRTQNLQKCLMAMLTRDENSSPFLTALCAQLECKTFDALADALNLLSDTERLLTQTNRTAFTQLLKPVNWQPLLDEI</sequence>
<feature type="chain" id="PRO_1000010020" description="DNA mismatch repair protein MutL">
    <location>
        <begin position="1"/>
        <end position="629"/>
    </location>
</feature>
<comment type="function">
    <text evidence="1">This protein is involved in the repair of mismatches in DNA. It is required for dam-dependent methyl-directed DNA mismatch repair. May act as a 'molecular matchmaker', a protein that promotes the formation of a stable complex between two or more DNA-binding proteins in an ATP-dependent manner without itself being part of a final effector complex.</text>
</comment>
<comment type="similarity">
    <text evidence="1">Belongs to the DNA mismatch repair MutL/HexB family.</text>
</comment>